<comment type="function">
    <text evidence="1">Major role in the synthesis of nucleoside triphosphates other than ATP. The ATP gamma phosphate is transferred to the NDP beta phosphate via a ping-pong mechanism, using a phosphorylated active-site intermediate.</text>
</comment>
<comment type="catalytic activity">
    <reaction evidence="1">
        <text>a 2'-deoxyribonucleoside 5'-diphosphate + ATP = a 2'-deoxyribonucleoside 5'-triphosphate + ADP</text>
        <dbReference type="Rhea" id="RHEA:44640"/>
        <dbReference type="ChEBI" id="CHEBI:30616"/>
        <dbReference type="ChEBI" id="CHEBI:61560"/>
        <dbReference type="ChEBI" id="CHEBI:73316"/>
        <dbReference type="ChEBI" id="CHEBI:456216"/>
        <dbReference type="EC" id="2.7.4.6"/>
    </reaction>
</comment>
<comment type="catalytic activity">
    <reaction evidence="1">
        <text>a ribonucleoside 5'-diphosphate + ATP = a ribonucleoside 5'-triphosphate + ADP</text>
        <dbReference type="Rhea" id="RHEA:18113"/>
        <dbReference type="ChEBI" id="CHEBI:30616"/>
        <dbReference type="ChEBI" id="CHEBI:57930"/>
        <dbReference type="ChEBI" id="CHEBI:61557"/>
        <dbReference type="ChEBI" id="CHEBI:456216"/>
        <dbReference type="EC" id="2.7.4.6"/>
    </reaction>
</comment>
<comment type="cofactor">
    <cofactor evidence="1">
        <name>Mg(2+)</name>
        <dbReference type="ChEBI" id="CHEBI:18420"/>
    </cofactor>
</comment>
<comment type="subcellular location">
    <subcellularLocation>
        <location evidence="1">Cytoplasm</location>
    </subcellularLocation>
</comment>
<comment type="similarity">
    <text evidence="1">Belongs to the NDK family.</text>
</comment>
<protein>
    <recommendedName>
        <fullName evidence="1">Nucleoside diphosphate kinase</fullName>
        <shortName evidence="1">NDK</shortName>
        <shortName evidence="1">NDP kinase</shortName>
        <ecNumber evidence="1">2.7.4.6</ecNumber>
    </recommendedName>
    <alternativeName>
        <fullName evidence="1">Nucleoside-2-P kinase</fullName>
    </alternativeName>
</protein>
<sequence length="154" mass="17503">MSEHERTFVMVKPDGVQRGLIGDIVSRFEDRGLKMVGGKFMQIDQELAEEHYGEHEDKPFFDGLVDFITSGPVFAMVWEGQDATRQVRTMMGETDPAESAPGTIRGDYGLDLGRNVIHGSDHEDEGANEREIELFFDEAELVDWDQIDSSWLYE</sequence>
<evidence type="ECO:0000255" key="1">
    <source>
        <dbReference type="HAMAP-Rule" id="MF_00451"/>
    </source>
</evidence>
<name>NDK_HALMA</name>
<dbReference type="EC" id="2.7.4.6" evidence="1"/>
<dbReference type="EMBL" id="AY596297">
    <property type="protein sequence ID" value="AAV45181.1"/>
    <property type="molecule type" value="Genomic_DNA"/>
</dbReference>
<dbReference type="RefSeq" id="WP_011222824.1">
    <property type="nucleotide sequence ID" value="NC_006396.1"/>
</dbReference>
<dbReference type="SMR" id="Q5V5M1"/>
<dbReference type="STRING" id="272569.rrnAC0106"/>
<dbReference type="PaxDb" id="272569-rrnAC0106"/>
<dbReference type="EnsemblBacteria" id="AAV45181">
    <property type="protein sequence ID" value="AAV45181"/>
    <property type="gene ID" value="rrnAC0106"/>
</dbReference>
<dbReference type="GeneID" id="40154416"/>
<dbReference type="KEGG" id="hma:rrnAC0106"/>
<dbReference type="PATRIC" id="fig|272569.17.peg.910"/>
<dbReference type="eggNOG" id="arCOG04313">
    <property type="taxonomic scope" value="Archaea"/>
</dbReference>
<dbReference type="HOGENOM" id="CLU_060216_6_3_2"/>
<dbReference type="Proteomes" id="UP000001169">
    <property type="component" value="Chromosome I"/>
</dbReference>
<dbReference type="GO" id="GO:0005737">
    <property type="term" value="C:cytoplasm"/>
    <property type="evidence" value="ECO:0007669"/>
    <property type="project" value="UniProtKB-SubCell"/>
</dbReference>
<dbReference type="GO" id="GO:0005524">
    <property type="term" value="F:ATP binding"/>
    <property type="evidence" value="ECO:0007669"/>
    <property type="project" value="UniProtKB-UniRule"/>
</dbReference>
<dbReference type="GO" id="GO:0046872">
    <property type="term" value="F:metal ion binding"/>
    <property type="evidence" value="ECO:0007669"/>
    <property type="project" value="UniProtKB-KW"/>
</dbReference>
<dbReference type="GO" id="GO:0004550">
    <property type="term" value="F:nucleoside diphosphate kinase activity"/>
    <property type="evidence" value="ECO:0007669"/>
    <property type="project" value="UniProtKB-UniRule"/>
</dbReference>
<dbReference type="GO" id="GO:0006241">
    <property type="term" value="P:CTP biosynthetic process"/>
    <property type="evidence" value="ECO:0007669"/>
    <property type="project" value="UniProtKB-UniRule"/>
</dbReference>
<dbReference type="GO" id="GO:0006183">
    <property type="term" value="P:GTP biosynthetic process"/>
    <property type="evidence" value="ECO:0007669"/>
    <property type="project" value="UniProtKB-UniRule"/>
</dbReference>
<dbReference type="GO" id="GO:0006228">
    <property type="term" value="P:UTP biosynthetic process"/>
    <property type="evidence" value="ECO:0007669"/>
    <property type="project" value="UniProtKB-UniRule"/>
</dbReference>
<dbReference type="CDD" id="cd04413">
    <property type="entry name" value="NDPk_I"/>
    <property type="match status" value="1"/>
</dbReference>
<dbReference type="FunFam" id="3.30.70.141:FF:000002">
    <property type="entry name" value="Nucleoside diphosphate kinase"/>
    <property type="match status" value="1"/>
</dbReference>
<dbReference type="Gene3D" id="3.30.70.141">
    <property type="entry name" value="Nucleoside diphosphate kinase-like domain"/>
    <property type="match status" value="1"/>
</dbReference>
<dbReference type="HAMAP" id="MF_00451">
    <property type="entry name" value="NDP_kinase"/>
    <property type="match status" value="1"/>
</dbReference>
<dbReference type="InterPro" id="IPR034907">
    <property type="entry name" value="NDK-like_dom"/>
</dbReference>
<dbReference type="InterPro" id="IPR036850">
    <property type="entry name" value="NDK-like_dom_sf"/>
</dbReference>
<dbReference type="InterPro" id="IPR001564">
    <property type="entry name" value="Nucleoside_diP_kinase"/>
</dbReference>
<dbReference type="NCBIfam" id="NF001908">
    <property type="entry name" value="PRK00668.1"/>
    <property type="match status" value="1"/>
</dbReference>
<dbReference type="PANTHER" id="PTHR11349">
    <property type="entry name" value="NUCLEOSIDE DIPHOSPHATE KINASE"/>
    <property type="match status" value="1"/>
</dbReference>
<dbReference type="Pfam" id="PF00334">
    <property type="entry name" value="NDK"/>
    <property type="match status" value="1"/>
</dbReference>
<dbReference type="PRINTS" id="PR01243">
    <property type="entry name" value="NUCDPKINASE"/>
</dbReference>
<dbReference type="SMART" id="SM00562">
    <property type="entry name" value="NDK"/>
    <property type="match status" value="1"/>
</dbReference>
<dbReference type="SUPFAM" id="SSF54919">
    <property type="entry name" value="Nucleoside diphosphate kinase, NDK"/>
    <property type="match status" value="1"/>
</dbReference>
<dbReference type="PROSITE" id="PS51374">
    <property type="entry name" value="NDPK_LIKE"/>
    <property type="match status" value="1"/>
</dbReference>
<feature type="chain" id="PRO_0000137088" description="Nucleoside diphosphate kinase">
    <location>
        <begin position="1"/>
        <end position="154"/>
    </location>
</feature>
<feature type="active site" description="Pros-phosphohistidine intermediate" evidence="1">
    <location>
        <position position="118"/>
    </location>
</feature>
<feature type="binding site" evidence="1">
    <location>
        <position position="12"/>
    </location>
    <ligand>
        <name>ATP</name>
        <dbReference type="ChEBI" id="CHEBI:30616"/>
    </ligand>
</feature>
<feature type="binding site" evidence="1">
    <location>
        <position position="60"/>
    </location>
    <ligand>
        <name>ATP</name>
        <dbReference type="ChEBI" id="CHEBI:30616"/>
    </ligand>
</feature>
<feature type="binding site" evidence="1">
    <location>
        <position position="88"/>
    </location>
    <ligand>
        <name>ATP</name>
        <dbReference type="ChEBI" id="CHEBI:30616"/>
    </ligand>
</feature>
<feature type="binding site" evidence="1">
    <location>
        <position position="94"/>
    </location>
    <ligand>
        <name>ATP</name>
        <dbReference type="ChEBI" id="CHEBI:30616"/>
    </ligand>
</feature>
<feature type="binding site" evidence="1">
    <location>
        <position position="105"/>
    </location>
    <ligand>
        <name>ATP</name>
        <dbReference type="ChEBI" id="CHEBI:30616"/>
    </ligand>
</feature>
<feature type="binding site" evidence="1">
    <location>
        <position position="115"/>
    </location>
    <ligand>
        <name>ATP</name>
        <dbReference type="ChEBI" id="CHEBI:30616"/>
    </ligand>
</feature>
<proteinExistence type="inferred from homology"/>
<reference key="1">
    <citation type="journal article" date="2004" name="Genome Res.">
        <title>Genome sequence of Haloarcula marismortui: a halophilic archaeon from the Dead Sea.</title>
        <authorList>
            <person name="Baliga N.S."/>
            <person name="Bonneau R."/>
            <person name="Facciotti M.T."/>
            <person name="Pan M."/>
            <person name="Glusman G."/>
            <person name="Deutsch E.W."/>
            <person name="Shannon P."/>
            <person name="Chiu Y."/>
            <person name="Weng R.S."/>
            <person name="Gan R.R."/>
            <person name="Hung P."/>
            <person name="Date S.V."/>
            <person name="Marcotte E."/>
            <person name="Hood L."/>
            <person name="Ng W.V."/>
        </authorList>
    </citation>
    <scope>NUCLEOTIDE SEQUENCE [LARGE SCALE GENOMIC DNA]</scope>
    <source>
        <strain>ATCC 43049 / DSM 3752 / JCM 8966 / VKM B-1809</strain>
    </source>
</reference>
<accession>Q5V5M1</accession>
<gene>
    <name evidence="1" type="primary">ndk</name>
    <name type="ordered locus">rrnAC0106</name>
</gene>
<keyword id="KW-0067">ATP-binding</keyword>
<keyword id="KW-0963">Cytoplasm</keyword>
<keyword id="KW-0418">Kinase</keyword>
<keyword id="KW-0460">Magnesium</keyword>
<keyword id="KW-0479">Metal-binding</keyword>
<keyword id="KW-0546">Nucleotide metabolism</keyword>
<keyword id="KW-0547">Nucleotide-binding</keyword>
<keyword id="KW-0597">Phosphoprotein</keyword>
<keyword id="KW-1185">Reference proteome</keyword>
<keyword id="KW-0808">Transferase</keyword>
<organism>
    <name type="scientific">Haloarcula marismortui (strain ATCC 43049 / DSM 3752 / JCM 8966 / VKM B-1809)</name>
    <name type="common">Halobacterium marismortui</name>
    <dbReference type="NCBI Taxonomy" id="272569"/>
    <lineage>
        <taxon>Archaea</taxon>
        <taxon>Methanobacteriati</taxon>
        <taxon>Methanobacteriota</taxon>
        <taxon>Stenosarchaea group</taxon>
        <taxon>Halobacteria</taxon>
        <taxon>Halobacteriales</taxon>
        <taxon>Haloarculaceae</taxon>
        <taxon>Haloarcula</taxon>
    </lineage>
</organism>